<feature type="chain" id="PRO_1000135591" description="Small ribosomal subunit protein uS7">
    <location>
        <begin position="1"/>
        <end position="157"/>
    </location>
</feature>
<proteinExistence type="inferred from homology"/>
<evidence type="ECO:0000255" key="1">
    <source>
        <dbReference type="HAMAP-Rule" id="MF_00480"/>
    </source>
</evidence>
<evidence type="ECO:0000305" key="2"/>
<protein>
    <recommendedName>
        <fullName evidence="1">Small ribosomal subunit protein uS7</fullName>
    </recommendedName>
    <alternativeName>
        <fullName evidence="2">30S ribosomal protein S7</fullName>
    </alternativeName>
</protein>
<accession>B9LJC7</accession>
<keyword id="KW-0687">Ribonucleoprotein</keyword>
<keyword id="KW-0689">Ribosomal protein</keyword>
<keyword id="KW-0694">RNA-binding</keyword>
<keyword id="KW-0699">rRNA-binding</keyword>
<keyword id="KW-0820">tRNA-binding</keyword>
<comment type="function">
    <text evidence="1">One of the primary rRNA binding proteins, it binds directly to 16S rRNA where it nucleates assembly of the head domain of the 30S subunit. Is located at the subunit interface close to the decoding center, probably blocks exit of the E-site tRNA.</text>
</comment>
<comment type="subunit">
    <text evidence="1">Part of the 30S ribosomal subunit. Contacts proteins S9 and S11.</text>
</comment>
<comment type="similarity">
    <text evidence="1">Belongs to the universal ribosomal protein uS7 family.</text>
</comment>
<gene>
    <name evidence="1" type="primary">rpsG</name>
    <name type="ordered locus">Chy400_2551</name>
</gene>
<organism>
    <name type="scientific">Chloroflexus aurantiacus (strain ATCC 29364 / DSM 637 / Y-400-fl)</name>
    <dbReference type="NCBI Taxonomy" id="480224"/>
    <lineage>
        <taxon>Bacteria</taxon>
        <taxon>Bacillati</taxon>
        <taxon>Chloroflexota</taxon>
        <taxon>Chloroflexia</taxon>
        <taxon>Chloroflexales</taxon>
        <taxon>Chloroflexineae</taxon>
        <taxon>Chloroflexaceae</taxon>
        <taxon>Chloroflexus</taxon>
    </lineage>
</organism>
<reference key="1">
    <citation type="submission" date="2009-01" db="EMBL/GenBank/DDBJ databases">
        <title>Complete sequence of Chloroflexus sp. Y-400-fl.</title>
        <authorList>
            <consortium name="US DOE Joint Genome Institute"/>
            <person name="Lucas S."/>
            <person name="Copeland A."/>
            <person name="Lapidus A."/>
            <person name="Glavina del Rio T."/>
            <person name="Dalin E."/>
            <person name="Tice H."/>
            <person name="Bruce D."/>
            <person name="Goodwin L."/>
            <person name="Pitluck S."/>
            <person name="Sims D."/>
            <person name="Kiss H."/>
            <person name="Brettin T."/>
            <person name="Detter J.C."/>
            <person name="Han C."/>
            <person name="Larimer F."/>
            <person name="Land M."/>
            <person name="Hauser L."/>
            <person name="Kyrpides N."/>
            <person name="Ovchinnikova G."/>
            <person name="Bryant D.A."/>
            <person name="Richardson P."/>
        </authorList>
    </citation>
    <scope>NUCLEOTIDE SEQUENCE [LARGE SCALE GENOMIC DNA]</scope>
    <source>
        <strain>ATCC 29364 / DSM 637 / Y-400-fl</strain>
    </source>
</reference>
<dbReference type="EMBL" id="CP001364">
    <property type="protein sequence ID" value="ACM53943.1"/>
    <property type="molecule type" value="Genomic_DNA"/>
</dbReference>
<dbReference type="SMR" id="B9LJC7"/>
<dbReference type="KEGG" id="chl:Chy400_2551"/>
<dbReference type="HOGENOM" id="CLU_072226_1_1_0"/>
<dbReference type="OrthoDB" id="9807653at2"/>
<dbReference type="GO" id="GO:0015935">
    <property type="term" value="C:small ribosomal subunit"/>
    <property type="evidence" value="ECO:0007669"/>
    <property type="project" value="InterPro"/>
</dbReference>
<dbReference type="GO" id="GO:0019843">
    <property type="term" value="F:rRNA binding"/>
    <property type="evidence" value="ECO:0007669"/>
    <property type="project" value="UniProtKB-UniRule"/>
</dbReference>
<dbReference type="GO" id="GO:0003735">
    <property type="term" value="F:structural constituent of ribosome"/>
    <property type="evidence" value="ECO:0007669"/>
    <property type="project" value="InterPro"/>
</dbReference>
<dbReference type="GO" id="GO:0000049">
    <property type="term" value="F:tRNA binding"/>
    <property type="evidence" value="ECO:0007669"/>
    <property type="project" value="UniProtKB-UniRule"/>
</dbReference>
<dbReference type="GO" id="GO:0006412">
    <property type="term" value="P:translation"/>
    <property type="evidence" value="ECO:0007669"/>
    <property type="project" value="UniProtKB-UniRule"/>
</dbReference>
<dbReference type="CDD" id="cd14869">
    <property type="entry name" value="uS7_Bacteria"/>
    <property type="match status" value="1"/>
</dbReference>
<dbReference type="FunFam" id="1.10.455.10:FF:000001">
    <property type="entry name" value="30S ribosomal protein S7"/>
    <property type="match status" value="1"/>
</dbReference>
<dbReference type="Gene3D" id="1.10.455.10">
    <property type="entry name" value="Ribosomal protein S7 domain"/>
    <property type="match status" value="1"/>
</dbReference>
<dbReference type="HAMAP" id="MF_00480_B">
    <property type="entry name" value="Ribosomal_uS7_B"/>
    <property type="match status" value="1"/>
</dbReference>
<dbReference type="InterPro" id="IPR000235">
    <property type="entry name" value="Ribosomal_uS7"/>
</dbReference>
<dbReference type="InterPro" id="IPR005717">
    <property type="entry name" value="Ribosomal_uS7_bac/org-type"/>
</dbReference>
<dbReference type="InterPro" id="IPR020606">
    <property type="entry name" value="Ribosomal_uS7_CS"/>
</dbReference>
<dbReference type="InterPro" id="IPR023798">
    <property type="entry name" value="Ribosomal_uS7_dom"/>
</dbReference>
<dbReference type="InterPro" id="IPR036823">
    <property type="entry name" value="Ribosomal_uS7_dom_sf"/>
</dbReference>
<dbReference type="NCBIfam" id="TIGR01029">
    <property type="entry name" value="rpsG_bact"/>
    <property type="match status" value="1"/>
</dbReference>
<dbReference type="PANTHER" id="PTHR11205">
    <property type="entry name" value="RIBOSOMAL PROTEIN S7"/>
    <property type="match status" value="1"/>
</dbReference>
<dbReference type="Pfam" id="PF00177">
    <property type="entry name" value="Ribosomal_S7"/>
    <property type="match status" value="1"/>
</dbReference>
<dbReference type="PIRSF" id="PIRSF002122">
    <property type="entry name" value="RPS7p_RPS7a_RPS5e_RPS7o"/>
    <property type="match status" value="1"/>
</dbReference>
<dbReference type="SUPFAM" id="SSF47973">
    <property type="entry name" value="Ribosomal protein S7"/>
    <property type="match status" value="1"/>
</dbReference>
<dbReference type="PROSITE" id="PS00052">
    <property type="entry name" value="RIBOSOMAL_S7"/>
    <property type="match status" value="1"/>
</dbReference>
<name>RS7_CHLSY</name>
<sequence>MPRRGNIERRPIPPDARYNSVLVQKFINKVMERGKKSLAERIVYQALDLAAERLKKPQMEIFEQALRNASPSIEVRPKRVGGATYQVPVEVKSDRRYSLAMRWLLMSARARTGKPMVERLAAELIDAYNNTGTTIKRKEDVHRMAEANRAFAHYGRL</sequence>